<protein>
    <recommendedName>
        <fullName evidence="1">GTP 3',8-cyclase</fullName>
        <ecNumber evidence="1">4.1.99.22</ecNumber>
    </recommendedName>
    <alternativeName>
        <fullName evidence="1">Molybdenum cofactor biosynthesis protein A</fullName>
    </alternativeName>
</protein>
<sequence>MEKNPQALVDGFNRKVDYLRMSVTDRCDFRCVYCMAEDMQFLPRQQILSLEELYQVAERFVALGTRKIRLTGGEPLVRQGIVELCGRIAALPGLRELCLTSNGSQLGRLAQPLFDAGVSRLNISLDSLDPERFRALTRTGDLKQVIAGIDAARAAGFRRTKLNAVVLKGRNDDEIVDLVRFAIDRELDISFIEEMPLGVISEHERGESFCSSDDVRNRLAEHFTLVESAESSQGPARYWRLAEAPSTRVGFISPHSHNFCATCNRVRLTVEGRLLLCLGNEHSVDLKQVLRQHPGDSARLEKAIRDAMQLKPYRHHFEVGGEVQILRFMNMTGG</sequence>
<name>MOAA_PSEE4</name>
<organism>
    <name type="scientific">Pseudomonas entomophila (strain L48)</name>
    <dbReference type="NCBI Taxonomy" id="384676"/>
    <lineage>
        <taxon>Bacteria</taxon>
        <taxon>Pseudomonadati</taxon>
        <taxon>Pseudomonadota</taxon>
        <taxon>Gammaproteobacteria</taxon>
        <taxon>Pseudomonadales</taxon>
        <taxon>Pseudomonadaceae</taxon>
        <taxon>Pseudomonas</taxon>
    </lineage>
</organism>
<comment type="function">
    <text evidence="1">Catalyzes the cyclization of GTP to (8S)-3',8-cyclo-7,8-dihydroguanosine 5'-triphosphate.</text>
</comment>
<comment type="catalytic activity">
    <reaction evidence="1">
        <text>GTP + AH2 + S-adenosyl-L-methionine = (8S)-3',8-cyclo-7,8-dihydroguanosine 5'-triphosphate + 5'-deoxyadenosine + L-methionine + A + H(+)</text>
        <dbReference type="Rhea" id="RHEA:49576"/>
        <dbReference type="ChEBI" id="CHEBI:13193"/>
        <dbReference type="ChEBI" id="CHEBI:15378"/>
        <dbReference type="ChEBI" id="CHEBI:17319"/>
        <dbReference type="ChEBI" id="CHEBI:17499"/>
        <dbReference type="ChEBI" id="CHEBI:37565"/>
        <dbReference type="ChEBI" id="CHEBI:57844"/>
        <dbReference type="ChEBI" id="CHEBI:59789"/>
        <dbReference type="ChEBI" id="CHEBI:131766"/>
        <dbReference type="EC" id="4.1.99.22"/>
    </reaction>
</comment>
<comment type="cofactor">
    <cofactor evidence="1">
        <name>[4Fe-4S] cluster</name>
        <dbReference type="ChEBI" id="CHEBI:49883"/>
    </cofactor>
    <text evidence="1">Binds 2 [4Fe-4S] clusters. Binds 1 [4Fe-4S] cluster coordinated with 3 cysteines and an exchangeable S-adenosyl-L-methionine and 1 [4Fe-4S] cluster coordinated with 3 cysteines and the GTP-derived substrate.</text>
</comment>
<comment type="pathway">
    <text evidence="1">Cofactor biosynthesis; molybdopterin biosynthesis.</text>
</comment>
<comment type="subunit">
    <text evidence="1">Monomer and homodimer.</text>
</comment>
<comment type="similarity">
    <text evidence="1">Belongs to the radical SAM superfamily. MoaA family.</text>
</comment>
<gene>
    <name evidence="1" type="primary">moaA</name>
    <name type="ordered locus">PSEEN4043</name>
</gene>
<accession>Q1I6J5</accession>
<feature type="chain" id="PRO_1000054212" description="GTP 3',8-cyclase">
    <location>
        <begin position="1"/>
        <end position="334"/>
    </location>
</feature>
<feature type="domain" description="Radical SAM core" evidence="2">
    <location>
        <begin position="11"/>
        <end position="235"/>
    </location>
</feature>
<feature type="binding site" evidence="1">
    <location>
        <position position="20"/>
    </location>
    <ligand>
        <name>GTP</name>
        <dbReference type="ChEBI" id="CHEBI:37565"/>
    </ligand>
</feature>
<feature type="binding site" evidence="1">
    <location>
        <position position="27"/>
    </location>
    <ligand>
        <name>[4Fe-4S] cluster</name>
        <dbReference type="ChEBI" id="CHEBI:49883"/>
        <label>1</label>
        <note>4Fe-4S-S-AdoMet</note>
    </ligand>
</feature>
<feature type="binding site" evidence="1">
    <location>
        <position position="31"/>
    </location>
    <ligand>
        <name>[4Fe-4S] cluster</name>
        <dbReference type="ChEBI" id="CHEBI:49883"/>
        <label>1</label>
        <note>4Fe-4S-S-AdoMet</note>
    </ligand>
</feature>
<feature type="binding site" evidence="1">
    <location>
        <position position="33"/>
    </location>
    <ligand>
        <name>S-adenosyl-L-methionine</name>
        <dbReference type="ChEBI" id="CHEBI:59789"/>
    </ligand>
</feature>
<feature type="binding site" evidence="1">
    <location>
        <position position="34"/>
    </location>
    <ligand>
        <name>[4Fe-4S] cluster</name>
        <dbReference type="ChEBI" id="CHEBI:49883"/>
        <label>1</label>
        <note>4Fe-4S-S-AdoMet</note>
    </ligand>
</feature>
<feature type="binding site" evidence="1">
    <location>
        <position position="69"/>
    </location>
    <ligand>
        <name>GTP</name>
        <dbReference type="ChEBI" id="CHEBI:37565"/>
    </ligand>
</feature>
<feature type="binding site" evidence="1">
    <location>
        <position position="73"/>
    </location>
    <ligand>
        <name>S-adenosyl-L-methionine</name>
        <dbReference type="ChEBI" id="CHEBI:59789"/>
    </ligand>
</feature>
<feature type="binding site" evidence="1">
    <location>
        <position position="100"/>
    </location>
    <ligand>
        <name>GTP</name>
        <dbReference type="ChEBI" id="CHEBI:37565"/>
    </ligand>
</feature>
<feature type="binding site" evidence="1">
    <location>
        <position position="124"/>
    </location>
    <ligand>
        <name>S-adenosyl-L-methionine</name>
        <dbReference type="ChEBI" id="CHEBI:59789"/>
    </ligand>
</feature>
<feature type="binding site" evidence="1">
    <location>
        <position position="161"/>
    </location>
    <ligand>
        <name>GTP</name>
        <dbReference type="ChEBI" id="CHEBI:37565"/>
    </ligand>
</feature>
<feature type="binding site" evidence="1">
    <location>
        <position position="195"/>
    </location>
    <ligand>
        <name>S-adenosyl-L-methionine</name>
        <dbReference type="ChEBI" id="CHEBI:59789"/>
    </ligand>
</feature>
<feature type="binding site" evidence="1">
    <location>
        <position position="260"/>
    </location>
    <ligand>
        <name>[4Fe-4S] cluster</name>
        <dbReference type="ChEBI" id="CHEBI:49883"/>
        <label>2</label>
        <note>4Fe-4S-substrate</note>
    </ligand>
</feature>
<feature type="binding site" evidence="1">
    <location>
        <position position="263"/>
    </location>
    <ligand>
        <name>[4Fe-4S] cluster</name>
        <dbReference type="ChEBI" id="CHEBI:49883"/>
        <label>2</label>
        <note>4Fe-4S-substrate</note>
    </ligand>
</feature>
<feature type="binding site" evidence="1">
    <location>
        <begin position="265"/>
        <end position="267"/>
    </location>
    <ligand>
        <name>GTP</name>
        <dbReference type="ChEBI" id="CHEBI:37565"/>
    </ligand>
</feature>
<feature type="binding site" evidence="1">
    <location>
        <position position="277"/>
    </location>
    <ligand>
        <name>[4Fe-4S] cluster</name>
        <dbReference type="ChEBI" id="CHEBI:49883"/>
        <label>2</label>
        <note>4Fe-4S-substrate</note>
    </ligand>
</feature>
<evidence type="ECO:0000255" key="1">
    <source>
        <dbReference type="HAMAP-Rule" id="MF_01225"/>
    </source>
</evidence>
<evidence type="ECO:0000255" key="2">
    <source>
        <dbReference type="PROSITE-ProRule" id="PRU01266"/>
    </source>
</evidence>
<keyword id="KW-0004">4Fe-4S</keyword>
<keyword id="KW-0342">GTP-binding</keyword>
<keyword id="KW-0408">Iron</keyword>
<keyword id="KW-0411">Iron-sulfur</keyword>
<keyword id="KW-0456">Lyase</keyword>
<keyword id="KW-0479">Metal-binding</keyword>
<keyword id="KW-0501">Molybdenum cofactor biosynthesis</keyword>
<keyword id="KW-0547">Nucleotide-binding</keyword>
<keyword id="KW-0949">S-adenosyl-L-methionine</keyword>
<reference key="1">
    <citation type="journal article" date="2006" name="Nat. Biotechnol.">
        <title>Complete genome sequence of the entomopathogenic and metabolically versatile soil bacterium Pseudomonas entomophila.</title>
        <authorList>
            <person name="Vodovar N."/>
            <person name="Vallenet D."/>
            <person name="Cruveiller S."/>
            <person name="Rouy Z."/>
            <person name="Barbe V."/>
            <person name="Acosta C."/>
            <person name="Cattolico L."/>
            <person name="Jubin C."/>
            <person name="Lajus A."/>
            <person name="Segurens B."/>
            <person name="Vacherie B."/>
            <person name="Wincker P."/>
            <person name="Weissenbach J."/>
            <person name="Lemaitre B."/>
            <person name="Medigue C."/>
            <person name="Boccard F."/>
        </authorList>
    </citation>
    <scope>NUCLEOTIDE SEQUENCE [LARGE SCALE GENOMIC DNA]</scope>
    <source>
        <strain>L48</strain>
    </source>
</reference>
<dbReference type="EC" id="4.1.99.22" evidence="1"/>
<dbReference type="EMBL" id="CT573326">
    <property type="protein sequence ID" value="CAK16740.1"/>
    <property type="molecule type" value="Genomic_DNA"/>
</dbReference>
<dbReference type="RefSeq" id="WP_011535112.1">
    <property type="nucleotide sequence ID" value="NC_008027.1"/>
</dbReference>
<dbReference type="SMR" id="Q1I6J5"/>
<dbReference type="STRING" id="384676.PSEEN4043"/>
<dbReference type="GeneID" id="32807059"/>
<dbReference type="KEGG" id="pen:PSEEN4043"/>
<dbReference type="eggNOG" id="COG2896">
    <property type="taxonomic scope" value="Bacteria"/>
</dbReference>
<dbReference type="HOGENOM" id="CLU_009273_0_1_6"/>
<dbReference type="OrthoDB" id="9763993at2"/>
<dbReference type="UniPathway" id="UPA00344"/>
<dbReference type="Proteomes" id="UP000000658">
    <property type="component" value="Chromosome"/>
</dbReference>
<dbReference type="GO" id="GO:0051539">
    <property type="term" value="F:4 iron, 4 sulfur cluster binding"/>
    <property type="evidence" value="ECO:0007669"/>
    <property type="project" value="UniProtKB-UniRule"/>
</dbReference>
<dbReference type="GO" id="GO:0061799">
    <property type="term" value="F:cyclic pyranopterin monophosphate synthase activity"/>
    <property type="evidence" value="ECO:0007669"/>
    <property type="project" value="TreeGrafter"/>
</dbReference>
<dbReference type="GO" id="GO:0061798">
    <property type="term" value="F:GTP 3',8'-cyclase activity"/>
    <property type="evidence" value="ECO:0007669"/>
    <property type="project" value="UniProtKB-UniRule"/>
</dbReference>
<dbReference type="GO" id="GO:0005525">
    <property type="term" value="F:GTP binding"/>
    <property type="evidence" value="ECO:0007669"/>
    <property type="project" value="UniProtKB-UniRule"/>
</dbReference>
<dbReference type="GO" id="GO:0046872">
    <property type="term" value="F:metal ion binding"/>
    <property type="evidence" value="ECO:0007669"/>
    <property type="project" value="UniProtKB-KW"/>
</dbReference>
<dbReference type="GO" id="GO:1904047">
    <property type="term" value="F:S-adenosyl-L-methionine binding"/>
    <property type="evidence" value="ECO:0007669"/>
    <property type="project" value="UniProtKB-UniRule"/>
</dbReference>
<dbReference type="GO" id="GO:0006777">
    <property type="term" value="P:Mo-molybdopterin cofactor biosynthetic process"/>
    <property type="evidence" value="ECO:0007669"/>
    <property type="project" value="UniProtKB-UniRule"/>
</dbReference>
<dbReference type="CDD" id="cd01335">
    <property type="entry name" value="Radical_SAM"/>
    <property type="match status" value="1"/>
</dbReference>
<dbReference type="CDD" id="cd21117">
    <property type="entry name" value="Twitch_MoaA"/>
    <property type="match status" value="1"/>
</dbReference>
<dbReference type="Gene3D" id="3.20.20.70">
    <property type="entry name" value="Aldolase class I"/>
    <property type="match status" value="1"/>
</dbReference>
<dbReference type="HAMAP" id="MF_01225_B">
    <property type="entry name" value="MoaA_B"/>
    <property type="match status" value="1"/>
</dbReference>
<dbReference type="InterPro" id="IPR013785">
    <property type="entry name" value="Aldolase_TIM"/>
</dbReference>
<dbReference type="InterPro" id="IPR006638">
    <property type="entry name" value="Elp3/MiaA/NifB-like_rSAM"/>
</dbReference>
<dbReference type="InterPro" id="IPR013483">
    <property type="entry name" value="MoaA"/>
</dbReference>
<dbReference type="InterPro" id="IPR000385">
    <property type="entry name" value="MoaA_NifB_PqqE_Fe-S-bd_CS"/>
</dbReference>
<dbReference type="InterPro" id="IPR010505">
    <property type="entry name" value="MoaA_twitch"/>
</dbReference>
<dbReference type="InterPro" id="IPR050105">
    <property type="entry name" value="MoCo_biosynth_MoaA/MoaC"/>
</dbReference>
<dbReference type="InterPro" id="IPR007197">
    <property type="entry name" value="rSAM"/>
</dbReference>
<dbReference type="NCBIfam" id="TIGR02666">
    <property type="entry name" value="moaA"/>
    <property type="match status" value="1"/>
</dbReference>
<dbReference type="PANTHER" id="PTHR22960:SF0">
    <property type="entry name" value="MOLYBDENUM COFACTOR BIOSYNTHESIS PROTEIN 1"/>
    <property type="match status" value="1"/>
</dbReference>
<dbReference type="PANTHER" id="PTHR22960">
    <property type="entry name" value="MOLYBDOPTERIN COFACTOR SYNTHESIS PROTEIN A"/>
    <property type="match status" value="1"/>
</dbReference>
<dbReference type="Pfam" id="PF13353">
    <property type="entry name" value="Fer4_12"/>
    <property type="match status" value="1"/>
</dbReference>
<dbReference type="Pfam" id="PF06463">
    <property type="entry name" value="Mob_synth_C"/>
    <property type="match status" value="1"/>
</dbReference>
<dbReference type="Pfam" id="PF04055">
    <property type="entry name" value="Radical_SAM"/>
    <property type="match status" value="1"/>
</dbReference>
<dbReference type="SFLD" id="SFLDG01383">
    <property type="entry name" value="cyclic_pyranopterin_phosphate"/>
    <property type="match status" value="1"/>
</dbReference>
<dbReference type="SFLD" id="SFLDS00029">
    <property type="entry name" value="Radical_SAM"/>
    <property type="match status" value="1"/>
</dbReference>
<dbReference type="SMART" id="SM00729">
    <property type="entry name" value="Elp3"/>
    <property type="match status" value="1"/>
</dbReference>
<dbReference type="SUPFAM" id="SSF102114">
    <property type="entry name" value="Radical SAM enzymes"/>
    <property type="match status" value="1"/>
</dbReference>
<dbReference type="PROSITE" id="PS01305">
    <property type="entry name" value="MOAA_NIFB_PQQE"/>
    <property type="match status" value="1"/>
</dbReference>
<dbReference type="PROSITE" id="PS51918">
    <property type="entry name" value="RADICAL_SAM"/>
    <property type="match status" value="1"/>
</dbReference>
<proteinExistence type="inferred from homology"/>